<dbReference type="EC" id="2.7.4.6" evidence="1"/>
<dbReference type="EMBL" id="CP000108">
    <property type="protein sequence ID" value="ABB27482.1"/>
    <property type="molecule type" value="Genomic_DNA"/>
</dbReference>
<dbReference type="SMR" id="Q3AU43"/>
<dbReference type="STRING" id="340177.Cag_0204"/>
<dbReference type="KEGG" id="cch:Cag_0204"/>
<dbReference type="eggNOG" id="COG0105">
    <property type="taxonomic scope" value="Bacteria"/>
</dbReference>
<dbReference type="HOGENOM" id="CLU_060216_8_1_10"/>
<dbReference type="OrthoDB" id="9801161at2"/>
<dbReference type="GO" id="GO:0005737">
    <property type="term" value="C:cytoplasm"/>
    <property type="evidence" value="ECO:0007669"/>
    <property type="project" value="UniProtKB-SubCell"/>
</dbReference>
<dbReference type="GO" id="GO:0005524">
    <property type="term" value="F:ATP binding"/>
    <property type="evidence" value="ECO:0007669"/>
    <property type="project" value="UniProtKB-UniRule"/>
</dbReference>
<dbReference type="GO" id="GO:0046872">
    <property type="term" value="F:metal ion binding"/>
    <property type="evidence" value="ECO:0007669"/>
    <property type="project" value="UniProtKB-KW"/>
</dbReference>
<dbReference type="GO" id="GO:0004550">
    <property type="term" value="F:nucleoside diphosphate kinase activity"/>
    <property type="evidence" value="ECO:0007669"/>
    <property type="project" value="UniProtKB-UniRule"/>
</dbReference>
<dbReference type="GO" id="GO:0006241">
    <property type="term" value="P:CTP biosynthetic process"/>
    <property type="evidence" value="ECO:0007669"/>
    <property type="project" value="UniProtKB-UniRule"/>
</dbReference>
<dbReference type="GO" id="GO:0006183">
    <property type="term" value="P:GTP biosynthetic process"/>
    <property type="evidence" value="ECO:0007669"/>
    <property type="project" value="UniProtKB-UniRule"/>
</dbReference>
<dbReference type="GO" id="GO:0006228">
    <property type="term" value="P:UTP biosynthetic process"/>
    <property type="evidence" value="ECO:0007669"/>
    <property type="project" value="UniProtKB-UniRule"/>
</dbReference>
<dbReference type="CDD" id="cd04413">
    <property type="entry name" value="NDPk_I"/>
    <property type="match status" value="1"/>
</dbReference>
<dbReference type="FunFam" id="3.30.70.141:FF:000017">
    <property type="entry name" value="Nucleoside diphosphate kinase"/>
    <property type="match status" value="1"/>
</dbReference>
<dbReference type="Gene3D" id="3.30.70.141">
    <property type="entry name" value="Nucleoside diphosphate kinase-like domain"/>
    <property type="match status" value="1"/>
</dbReference>
<dbReference type="HAMAP" id="MF_00451">
    <property type="entry name" value="NDP_kinase"/>
    <property type="match status" value="1"/>
</dbReference>
<dbReference type="InterPro" id="IPR034907">
    <property type="entry name" value="NDK-like_dom"/>
</dbReference>
<dbReference type="InterPro" id="IPR036850">
    <property type="entry name" value="NDK-like_dom_sf"/>
</dbReference>
<dbReference type="InterPro" id="IPR001564">
    <property type="entry name" value="Nucleoside_diP_kinase"/>
</dbReference>
<dbReference type="InterPro" id="IPR023005">
    <property type="entry name" value="Nucleoside_diP_kinase_AS"/>
</dbReference>
<dbReference type="NCBIfam" id="NF001908">
    <property type="entry name" value="PRK00668.1"/>
    <property type="match status" value="1"/>
</dbReference>
<dbReference type="NCBIfam" id="NF011113">
    <property type="entry name" value="PRK14541.1"/>
    <property type="match status" value="1"/>
</dbReference>
<dbReference type="PANTHER" id="PTHR46161">
    <property type="entry name" value="NUCLEOSIDE DIPHOSPHATE KINASE"/>
    <property type="match status" value="1"/>
</dbReference>
<dbReference type="PANTHER" id="PTHR46161:SF3">
    <property type="entry name" value="NUCLEOSIDE DIPHOSPHATE KINASE DDB_G0292928-RELATED"/>
    <property type="match status" value="1"/>
</dbReference>
<dbReference type="Pfam" id="PF00334">
    <property type="entry name" value="NDK"/>
    <property type="match status" value="1"/>
</dbReference>
<dbReference type="PRINTS" id="PR01243">
    <property type="entry name" value="NUCDPKINASE"/>
</dbReference>
<dbReference type="SMART" id="SM00562">
    <property type="entry name" value="NDK"/>
    <property type="match status" value="1"/>
</dbReference>
<dbReference type="SUPFAM" id="SSF54919">
    <property type="entry name" value="Nucleoside diphosphate kinase, NDK"/>
    <property type="match status" value="1"/>
</dbReference>
<dbReference type="PROSITE" id="PS00469">
    <property type="entry name" value="NDPK"/>
    <property type="match status" value="1"/>
</dbReference>
<dbReference type="PROSITE" id="PS51374">
    <property type="entry name" value="NDPK_LIKE"/>
    <property type="match status" value="1"/>
</dbReference>
<sequence>MERTLTILKPDCVRKQLIGAVINHIERAGFRVVAMKKIHLTKEAAGEFYAVHRERPFYGELVDFMSSGACVPMILEKENAVADFRTVIGATDPAEAAEGTVRKLYADSKGENIIHGSDSVENAAIEAAFFFSTEEVVRSN</sequence>
<comment type="function">
    <text evidence="1">Major role in the synthesis of nucleoside triphosphates other than ATP. The ATP gamma phosphate is transferred to the NDP beta phosphate via a ping-pong mechanism, using a phosphorylated active-site intermediate.</text>
</comment>
<comment type="catalytic activity">
    <reaction evidence="1">
        <text>a 2'-deoxyribonucleoside 5'-diphosphate + ATP = a 2'-deoxyribonucleoside 5'-triphosphate + ADP</text>
        <dbReference type="Rhea" id="RHEA:44640"/>
        <dbReference type="ChEBI" id="CHEBI:30616"/>
        <dbReference type="ChEBI" id="CHEBI:61560"/>
        <dbReference type="ChEBI" id="CHEBI:73316"/>
        <dbReference type="ChEBI" id="CHEBI:456216"/>
        <dbReference type="EC" id="2.7.4.6"/>
    </reaction>
</comment>
<comment type="catalytic activity">
    <reaction evidence="1">
        <text>a ribonucleoside 5'-diphosphate + ATP = a ribonucleoside 5'-triphosphate + ADP</text>
        <dbReference type="Rhea" id="RHEA:18113"/>
        <dbReference type="ChEBI" id="CHEBI:30616"/>
        <dbReference type="ChEBI" id="CHEBI:57930"/>
        <dbReference type="ChEBI" id="CHEBI:61557"/>
        <dbReference type="ChEBI" id="CHEBI:456216"/>
        <dbReference type="EC" id="2.7.4.6"/>
    </reaction>
</comment>
<comment type="cofactor">
    <cofactor evidence="1">
        <name>Mg(2+)</name>
        <dbReference type="ChEBI" id="CHEBI:18420"/>
    </cofactor>
</comment>
<comment type="subunit">
    <text evidence="1">Homotetramer.</text>
</comment>
<comment type="subcellular location">
    <subcellularLocation>
        <location evidence="1">Cytoplasm</location>
    </subcellularLocation>
</comment>
<comment type="similarity">
    <text evidence="1">Belongs to the NDK family.</text>
</comment>
<protein>
    <recommendedName>
        <fullName evidence="1">Nucleoside diphosphate kinase</fullName>
        <shortName evidence="1">NDK</shortName>
        <shortName evidence="1">NDP kinase</shortName>
        <ecNumber evidence="1">2.7.4.6</ecNumber>
    </recommendedName>
    <alternativeName>
        <fullName evidence="1">Nucleoside-2-P kinase</fullName>
    </alternativeName>
</protein>
<proteinExistence type="inferred from homology"/>
<feature type="chain" id="PRO_0000226554" description="Nucleoside diphosphate kinase">
    <location>
        <begin position="1"/>
        <end position="140"/>
    </location>
</feature>
<feature type="active site" description="Pros-phosphohistidine intermediate" evidence="1">
    <location>
        <position position="115"/>
    </location>
</feature>
<feature type="binding site" evidence="1">
    <location>
        <position position="9"/>
    </location>
    <ligand>
        <name>ATP</name>
        <dbReference type="ChEBI" id="CHEBI:30616"/>
    </ligand>
</feature>
<feature type="binding site" evidence="1">
    <location>
        <position position="57"/>
    </location>
    <ligand>
        <name>ATP</name>
        <dbReference type="ChEBI" id="CHEBI:30616"/>
    </ligand>
</feature>
<feature type="binding site" evidence="1">
    <location>
        <position position="85"/>
    </location>
    <ligand>
        <name>ATP</name>
        <dbReference type="ChEBI" id="CHEBI:30616"/>
    </ligand>
</feature>
<feature type="binding site" evidence="1">
    <location>
        <position position="91"/>
    </location>
    <ligand>
        <name>ATP</name>
        <dbReference type="ChEBI" id="CHEBI:30616"/>
    </ligand>
</feature>
<feature type="binding site" evidence="1">
    <location>
        <position position="102"/>
    </location>
    <ligand>
        <name>ATP</name>
        <dbReference type="ChEBI" id="CHEBI:30616"/>
    </ligand>
</feature>
<feature type="binding site" evidence="1">
    <location>
        <position position="112"/>
    </location>
    <ligand>
        <name>ATP</name>
        <dbReference type="ChEBI" id="CHEBI:30616"/>
    </ligand>
</feature>
<reference key="1">
    <citation type="submission" date="2005-08" db="EMBL/GenBank/DDBJ databases">
        <title>Complete sequence of Chlorobium chlorochromatii CaD3.</title>
        <authorList>
            <consortium name="US DOE Joint Genome Institute"/>
            <person name="Copeland A."/>
            <person name="Lucas S."/>
            <person name="Lapidus A."/>
            <person name="Barry K."/>
            <person name="Detter J.C."/>
            <person name="Glavina T."/>
            <person name="Hammon N."/>
            <person name="Israni S."/>
            <person name="Pitluck S."/>
            <person name="Bryant D."/>
            <person name="Schmutz J."/>
            <person name="Larimer F."/>
            <person name="Land M."/>
            <person name="Kyrpides N."/>
            <person name="Ivanova N."/>
            <person name="Richardson P."/>
        </authorList>
    </citation>
    <scope>NUCLEOTIDE SEQUENCE [LARGE SCALE GENOMIC DNA]</scope>
    <source>
        <strain>CaD3</strain>
    </source>
</reference>
<gene>
    <name evidence="1" type="primary">ndk</name>
    <name type="ordered locus">Cag_0204</name>
</gene>
<organism>
    <name type="scientific">Chlorobium chlorochromatii (strain CaD3)</name>
    <dbReference type="NCBI Taxonomy" id="340177"/>
    <lineage>
        <taxon>Bacteria</taxon>
        <taxon>Pseudomonadati</taxon>
        <taxon>Chlorobiota</taxon>
        <taxon>Chlorobiia</taxon>
        <taxon>Chlorobiales</taxon>
        <taxon>Chlorobiaceae</taxon>
        <taxon>Chlorobium/Pelodictyon group</taxon>
        <taxon>Chlorobium</taxon>
    </lineage>
</organism>
<keyword id="KW-0067">ATP-binding</keyword>
<keyword id="KW-0963">Cytoplasm</keyword>
<keyword id="KW-0418">Kinase</keyword>
<keyword id="KW-0460">Magnesium</keyword>
<keyword id="KW-0479">Metal-binding</keyword>
<keyword id="KW-0546">Nucleotide metabolism</keyword>
<keyword id="KW-0547">Nucleotide-binding</keyword>
<keyword id="KW-0597">Phosphoprotein</keyword>
<keyword id="KW-0808">Transferase</keyword>
<name>NDK_CHLCH</name>
<evidence type="ECO:0000255" key="1">
    <source>
        <dbReference type="HAMAP-Rule" id="MF_00451"/>
    </source>
</evidence>
<accession>Q3AU43</accession>